<gene>
    <name type="primary">rpa43</name>
    <name type="ORF">DDB_G0268198</name>
</gene>
<comment type="function">
    <text evidence="1">DNA-dependent RNA polymerase catalyzes the transcription of DNA into RNA using the four ribonucleoside triphosphates as substrates. Component of RNA polymerase I which synthesizes ribosomal RNA precursors (By similarity).</text>
</comment>
<comment type="subunit">
    <text evidence="1">Component of the RNA polymerase I (Pol I) complex.</text>
</comment>
<comment type="subcellular location">
    <subcellularLocation>
        <location evidence="1">Nucleus</location>
        <location evidence="1">Nucleolus</location>
    </subcellularLocation>
</comment>
<comment type="induction">
    <text evidence="3">Up-regulated by phagocytic stimuli.</text>
</comment>
<comment type="similarity">
    <text evidence="4">Belongs to the eukaryotic RPA43 RNA polymerase subunit family.</text>
</comment>
<sequence length="356" mass="40319">MTSKIVSVNPLIKPVENCFEEMKVQLSLQLPPMDTQSLCSGTKSMLDRLVFKYKTELGGIIISYYDVIHTDKEAKIFYDSPYLGMNIHVKFLVFKPFKDQILNGVVKRVSTTHISLLVFGTISASIPKSNIPKSFAFDHSSNMFMNKQTKATISVGTKIAFKVIDVSADRHNIGIQGDMTDLTSTGIIGFDENQSLQFGSQYETPNKNVKNNKYNNNNNNNNNGNNNTTLINTENNNNITKFDDDSEKESEEEPKPIIIKEEPKIVSVKVESKKVVVKEEEQKSSKKDKDIKKEKESKKRKKDSSDESDESEEDKKKKSTKKEKESSSKKSSKKVKVESSSESSEDEKEKKKKKKK</sequence>
<feature type="chain" id="PRO_0000365595" description="Probable DNA-directed RNA polymerase I subunit RPA43">
    <location>
        <begin position="1"/>
        <end position="356"/>
    </location>
</feature>
<feature type="region of interest" description="Disordered" evidence="2">
    <location>
        <begin position="211"/>
        <end position="356"/>
    </location>
</feature>
<feature type="compositionally biased region" description="Low complexity" evidence="2">
    <location>
        <begin position="211"/>
        <end position="238"/>
    </location>
</feature>
<feature type="compositionally biased region" description="Basic and acidic residues" evidence="2">
    <location>
        <begin position="253"/>
        <end position="297"/>
    </location>
</feature>
<organism>
    <name type="scientific">Dictyostelium discoideum</name>
    <name type="common">Social amoeba</name>
    <dbReference type="NCBI Taxonomy" id="44689"/>
    <lineage>
        <taxon>Eukaryota</taxon>
        <taxon>Amoebozoa</taxon>
        <taxon>Evosea</taxon>
        <taxon>Eumycetozoa</taxon>
        <taxon>Dictyostelia</taxon>
        <taxon>Dictyosteliales</taxon>
        <taxon>Dictyosteliaceae</taxon>
        <taxon>Dictyostelium</taxon>
    </lineage>
</organism>
<proteinExistence type="evidence at transcript level"/>
<reference key="1">
    <citation type="journal article" date="2005" name="Nature">
        <title>The genome of the social amoeba Dictyostelium discoideum.</title>
        <authorList>
            <person name="Eichinger L."/>
            <person name="Pachebat J.A."/>
            <person name="Gloeckner G."/>
            <person name="Rajandream M.A."/>
            <person name="Sucgang R."/>
            <person name="Berriman M."/>
            <person name="Song J."/>
            <person name="Olsen R."/>
            <person name="Szafranski K."/>
            <person name="Xu Q."/>
            <person name="Tunggal B."/>
            <person name="Kummerfeld S."/>
            <person name="Madera M."/>
            <person name="Konfortov B.A."/>
            <person name="Rivero F."/>
            <person name="Bankier A.T."/>
            <person name="Lehmann R."/>
            <person name="Hamlin N."/>
            <person name="Davies R."/>
            <person name="Gaudet P."/>
            <person name="Fey P."/>
            <person name="Pilcher K."/>
            <person name="Chen G."/>
            <person name="Saunders D."/>
            <person name="Sodergren E.J."/>
            <person name="Davis P."/>
            <person name="Kerhornou A."/>
            <person name="Nie X."/>
            <person name="Hall N."/>
            <person name="Anjard C."/>
            <person name="Hemphill L."/>
            <person name="Bason N."/>
            <person name="Farbrother P."/>
            <person name="Desany B."/>
            <person name="Just E."/>
            <person name="Morio T."/>
            <person name="Rost R."/>
            <person name="Churcher C.M."/>
            <person name="Cooper J."/>
            <person name="Haydock S."/>
            <person name="van Driessche N."/>
            <person name="Cronin A."/>
            <person name="Goodhead I."/>
            <person name="Muzny D.M."/>
            <person name="Mourier T."/>
            <person name="Pain A."/>
            <person name="Lu M."/>
            <person name="Harper D."/>
            <person name="Lindsay R."/>
            <person name="Hauser H."/>
            <person name="James K.D."/>
            <person name="Quiles M."/>
            <person name="Madan Babu M."/>
            <person name="Saito T."/>
            <person name="Buchrieser C."/>
            <person name="Wardroper A."/>
            <person name="Felder M."/>
            <person name="Thangavelu M."/>
            <person name="Johnson D."/>
            <person name="Knights A."/>
            <person name="Loulseged H."/>
            <person name="Mungall K.L."/>
            <person name="Oliver K."/>
            <person name="Price C."/>
            <person name="Quail M.A."/>
            <person name="Urushihara H."/>
            <person name="Hernandez J."/>
            <person name="Rabbinowitsch E."/>
            <person name="Steffen D."/>
            <person name="Sanders M."/>
            <person name="Ma J."/>
            <person name="Kohara Y."/>
            <person name="Sharp S."/>
            <person name="Simmonds M.N."/>
            <person name="Spiegler S."/>
            <person name="Tivey A."/>
            <person name="Sugano S."/>
            <person name="White B."/>
            <person name="Walker D."/>
            <person name="Woodward J.R."/>
            <person name="Winckler T."/>
            <person name="Tanaka Y."/>
            <person name="Shaulsky G."/>
            <person name="Schleicher M."/>
            <person name="Weinstock G.M."/>
            <person name="Rosenthal A."/>
            <person name="Cox E.C."/>
            <person name="Chisholm R.L."/>
            <person name="Gibbs R.A."/>
            <person name="Loomis W.F."/>
            <person name="Platzer M."/>
            <person name="Kay R.R."/>
            <person name="Williams J.G."/>
            <person name="Dear P.H."/>
            <person name="Noegel A.A."/>
            <person name="Barrell B.G."/>
            <person name="Kuspa A."/>
        </authorList>
    </citation>
    <scope>NUCLEOTIDE SEQUENCE [LARGE SCALE GENOMIC DNA]</scope>
    <source>
        <strain>AX4</strain>
    </source>
</reference>
<reference key="2">
    <citation type="journal article" date="2008" name="BMC Genomics">
        <title>Genome-wide transcriptional changes induced by phagocytosis or growth on bacteria in Dictyostelium.</title>
        <authorList>
            <person name="Sillo A."/>
            <person name="Bloomfield G."/>
            <person name="Balest A."/>
            <person name="Balbo A."/>
            <person name="Pergolizzi B."/>
            <person name="Peracino B."/>
            <person name="Skelton J."/>
            <person name="Ivens A."/>
            <person name="Bozzaro S."/>
        </authorList>
    </citation>
    <scope>INDUCTION [LARGE SCALE ANALYSIS]</scope>
</reference>
<protein>
    <recommendedName>
        <fullName>Probable DNA-directed RNA polymerase I subunit RPA43</fullName>
    </recommendedName>
</protein>
<name>RPA43_DICDI</name>
<accession>Q55FA4</accession>
<evidence type="ECO:0000250" key="1"/>
<evidence type="ECO:0000256" key="2">
    <source>
        <dbReference type="SAM" id="MobiDB-lite"/>
    </source>
</evidence>
<evidence type="ECO:0000269" key="3">
    <source>
    </source>
</evidence>
<evidence type="ECO:0000305" key="4"/>
<keyword id="KW-0240">DNA-directed RNA polymerase</keyword>
<keyword id="KW-0539">Nucleus</keyword>
<keyword id="KW-1185">Reference proteome</keyword>
<keyword id="KW-0804">Transcription</keyword>
<dbReference type="EMBL" id="AAFI02000003">
    <property type="protein sequence ID" value="EAL73552.1"/>
    <property type="molecule type" value="Genomic_DNA"/>
</dbReference>
<dbReference type="RefSeq" id="XP_647629.1">
    <property type="nucleotide sequence ID" value="XM_642537.1"/>
</dbReference>
<dbReference type="SMR" id="Q55FA4"/>
<dbReference type="FunCoup" id="Q55FA4">
    <property type="interactions" value="1"/>
</dbReference>
<dbReference type="STRING" id="44689.Q55FA4"/>
<dbReference type="PaxDb" id="44689-DDB0216290"/>
<dbReference type="EnsemblProtists" id="EAL73552">
    <property type="protein sequence ID" value="EAL73552"/>
    <property type="gene ID" value="DDB_G0268198"/>
</dbReference>
<dbReference type="GeneID" id="8616444"/>
<dbReference type="KEGG" id="ddi:DDB_G0268198"/>
<dbReference type="dictyBase" id="DDB_G0268198">
    <property type="gene designation" value="rpa43"/>
</dbReference>
<dbReference type="VEuPathDB" id="AmoebaDB:DDB_G0268198"/>
<dbReference type="eggNOG" id="KOG4134">
    <property type="taxonomic scope" value="Eukaryota"/>
</dbReference>
<dbReference type="HOGENOM" id="CLU_779440_0_0_1"/>
<dbReference type="InParanoid" id="Q55FA4"/>
<dbReference type="OMA" id="LWEEEPK"/>
<dbReference type="Reactome" id="R-DDI-73762">
    <property type="pathway name" value="RNA Polymerase I Transcription Initiation"/>
</dbReference>
<dbReference type="Reactome" id="R-DDI-73772">
    <property type="pathway name" value="RNA Polymerase I Promoter Escape"/>
</dbReference>
<dbReference type="PRO" id="PR:Q55FA4"/>
<dbReference type="Proteomes" id="UP000002195">
    <property type="component" value="Chromosome 1"/>
</dbReference>
<dbReference type="GO" id="GO:0005736">
    <property type="term" value="C:RNA polymerase I complex"/>
    <property type="evidence" value="ECO:0000250"/>
    <property type="project" value="dictyBase"/>
</dbReference>
<dbReference type="GO" id="GO:0003899">
    <property type="term" value="F:DNA-directed RNA polymerase activity"/>
    <property type="evidence" value="ECO:0000250"/>
    <property type="project" value="dictyBase"/>
</dbReference>
<dbReference type="GO" id="GO:0003676">
    <property type="term" value="F:nucleic acid binding"/>
    <property type="evidence" value="ECO:0007669"/>
    <property type="project" value="InterPro"/>
</dbReference>
<dbReference type="GO" id="GO:0006352">
    <property type="term" value="P:DNA-templated transcription initiation"/>
    <property type="evidence" value="ECO:0007669"/>
    <property type="project" value="InterPro"/>
</dbReference>
<dbReference type="GO" id="GO:0006360">
    <property type="term" value="P:transcription by RNA polymerase I"/>
    <property type="evidence" value="ECO:0000250"/>
    <property type="project" value="dictyBase"/>
</dbReference>
<dbReference type="GO" id="GO:0006362">
    <property type="term" value="P:transcription elongation by RNA polymerase I"/>
    <property type="evidence" value="ECO:0000318"/>
    <property type="project" value="GO_Central"/>
</dbReference>
<dbReference type="CDD" id="cd04328">
    <property type="entry name" value="RNAP_I_Rpa43_N"/>
    <property type="match status" value="1"/>
</dbReference>
<dbReference type="FunFam" id="3.30.1490.120:FF:000024">
    <property type="entry name" value="Probable DNA-directed RNA polymerase I subunit RPA43"/>
    <property type="match status" value="1"/>
</dbReference>
<dbReference type="Gene3D" id="2.40.50.140">
    <property type="entry name" value="Nucleic acid-binding proteins"/>
    <property type="match status" value="1"/>
</dbReference>
<dbReference type="Gene3D" id="3.30.1490.120">
    <property type="entry name" value="RNA polymerase Rpb7-like, N-terminal domain"/>
    <property type="match status" value="1"/>
</dbReference>
<dbReference type="InterPro" id="IPR012340">
    <property type="entry name" value="NA-bd_OB-fold"/>
</dbReference>
<dbReference type="InterPro" id="IPR036898">
    <property type="entry name" value="RNA_pol_Rpb7-like_N_sf"/>
</dbReference>
<dbReference type="InterPro" id="IPR041901">
    <property type="entry name" value="RNAP_I_Rpa43_N"/>
</dbReference>
<dbReference type="InterPro" id="IPR045113">
    <property type="entry name" value="Rpb7-like"/>
</dbReference>
<dbReference type="InterPro" id="IPR005576">
    <property type="entry name" value="Rpb7-like_N"/>
</dbReference>
<dbReference type="InterPro" id="IPR003029">
    <property type="entry name" value="S1_domain"/>
</dbReference>
<dbReference type="PANTHER" id="PTHR12709:SF5">
    <property type="entry name" value="DNA-DIRECTED RNA POLYMERASE I SUBUNIT RPA43"/>
    <property type="match status" value="1"/>
</dbReference>
<dbReference type="PANTHER" id="PTHR12709">
    <property type="entry name" value="DNA-DIRECTED RNA POLYMERASE II, III"/>
    <property type="match status" value="1"/>
</dbReference>
<dbReference type="Pfam" id="PF00575">
    <property type="entry name" value="S1"/>
    <property type="match status" value="1"/>
</dbReference>
<dbReference type="Pfam" id="PF03876">
    <property type="entry name" value="SHS2_Rpb7-N"/>
    <property type="match status" value="1"/>
</dbReference>
<dbReference type="SUPFAM" id="SSF50249">
    <property type="entry name" value="Nucleic acid-binding proteins"/>
    <property type="match status" value="1"/>
</dbReference>